<proteinExistence type="inferred from homology"/>
<protein>
    <recommendedName>
        <fullName evidence="1">Nucleoid-associated protein Pfl01_1806</fullName>
    </recommendedName>
</protein>
<feature type="chain" id="PRO_1000003802" description="Nucleoid-associated protein Pfl01_1806">
    <location>
        <begin position="1"/>
        <end position="112"/>
    </location>
</feature>
<keyword id="KW-0963">Cytoplasm</keyword>
<keyword id="KW-0238">DNA-binding</keyword>
<sequence>MMKGGMAGLMKQAQQMQEKMAKMQEELANAEVTGKAGGDLVTVVMTGRHDVKKVSIDPSVLPGLDEDDREVVEDLVAAAVNAAVRQIEANSQAKMGSMTAGMNLPAGMKLPF</sequence>
<gene>
    <name type="ordered locus">Pfl01_1806</name>
</gene>
<dbReference type="EMBL" id="CP000094">
    <property type="protein sequence ID" value="ABA73549.1"/>
    <property type="molecule type" value="Genomic_DNA"/>
</dbReference>
<dbReference type="RefSeq" id="WP_007951650.1">
    <property type="nucleotide sequence ID" value="NC_007492.2"/>
</dbReference>
<dbReference type="SMR" id="Q3KFA7"/>
<dbReference type="KEGG" id="pfo:Pfl01_1806"/>
<dbReference type="eggNOG" id="COG0718">
    <property type="taxonomic scope" value="Bacteria"/>
</dbReference>
<dbReference type="HOGENOM" id="CLU_140930_0_0_6"/>
<dbReference type="Proteomes" id="UP000002704">
    <property type="component" value="Chromosome"/>
</dbReference>
<dbReference type="GO" id="GO:0043590">
    <property type="term" value="C:bacterial nucleoid"/>
    <property type="evidence" value="ECO:0007669"/>
    <property type="project" value="UniProtKB-UniRule"/>
</dbReference>
<dbReference type="GO" id="GO:0005829">
    <property type="term" value="C:cytosol"/>
    <property type="evidence" value="ECO:0007669"/>
    <property type="project" value="TreeGrafter"/>
</dbReference>
<dbReference type="GO" id="GO:0003677">
    <property type="term" value="F:DNA binding"/>
    <property type="evidence" value="ECO:0007669"/>
    <property type="project" value="UniProtKB-UniRule"/>
</dbReference>
<dbReference type="Gene3D" id="3.30.1310.10">
    <property type="entry name" value="Nucleoid-associated protein YbaB-like domain"/>
    <property type="match status" value="1"/>
</dbReference>
<dbReference type="HAMAP" id="MF_00274">
    <property type="entry name" value="DNA_YbaB_EbfC"/>
    <property type="match status" value="1"/>
</dbReference>
<dbReference type="InterPro" id="IPR036894">
    <property type="entry name" value="YbaB-like_sf"/>
</dbReference>
<dbReference type="InterPro" id="IPR004401">
    <property type="entry name" value="YbaB/EbfC"/>
</dbReference>
<dbReference type="NCBIfam" id="TIGR00103">
    <property type="entry name" value="DNA_YbaB_EbfC"/>
    <property type="match status" value="1"/>
</dbReference>
<dbReference type="PANTHER" id="PTHR33449">
    <property type="entry name" value="NUCLEOID-ASSOCIATED PROTEIN YBAB"/>
    <property type="match status" value="1"/>
</dbReference>
<dbReference type="PANTHER" id="PTHR33449:SF1">
    <property type="entry name" value="NUCLEOID-ASSOCIATED PROTEIN YBAB"/>
    <property type="match status" value="1"/>
</dbReference>
<dbReference type="Pfam" id="PF02575">
    <property type="entry name" value="YbaB_DNA_bd"/>
    <property type="match status" value="1"/>
</dbReference>
<dbReference type="PIRSF" id="PIRSF004555">
    <property type="entry name" value="UCP004555"/>
    <property type="match status" value="1"/>
</dbReference>
<dbReference type="SUPFAM" id="SSF82607">
    <property type="entry name" value="YbaB-like"/>
    <property type="match status" value="1"/>
</dbReference>
<organism>
    <name type="scientific">Pseudomonas fluorescens (strain Pf0-1)</name>
    <dbReference type="NCBI Taxonomy" id="205922"/>
    <lineage>
        <taxon>Bacteria</taxon>
        <taxon>Pseudomonadati</taxon>
        <taxon>Pseudomonadota</taxon>
        <taxon>Gammaproteobacteria</taxon>
        <taxon>Pseudomonadales</taxon>
        <taxon>Pseudomonadaceae</taxon>
        <taxon>Pseudomonas</taxon>
    </lineage>
</organism>
<accession>Q3KFA7</accession>
<evidence type="ECO:0000255" key="1">
    <source>
        <dbReference type="HAMAP-Rule" id="MF_00274"/>
    </source>
</evidence>
<reference key="1">
    <citation type="journal article" date="2009" name="Genome Biol.">
        <title>Genomic and genetic analyses of diversity and plant interactions of Pseudomonas fluorescens.</title>
        <authorList>
            <person name="Silby M.W."/>
            <person name="Cerdeno-Tarraga A.M."/>
            <person name="Vernikos G.S."/>
            <person name="Giddens S.R."/>
            <person name="Jackson R.W."/>
            <person name="Preston G.M."/>
            <person name="Zhang X.-X."/>
            <person name="Moon C.D."/>
            <person name="Gehrig S.M."/>
            <person name="Godfrey S.A.C."/>
            <person name="Knight C.G."/>
            <person name="Malone J.G."/>
            <person name="Robinson Z."/>
            <person name="Spiers A.J."/>
            <person name="Harris S."/>
            <person name="Challis G.L."/>
            <person name="Yaxley A.M."/>
            <person name="Harris D."/>
            <person name="Seeger K."/>
            <person name="Murphy L."/>
            <person name="Rutter S."/>
            <person name="Squares R."/>
            <person name="Quail M.A."/>
            <person name="Saunders E."/>
            <person name="Mavromatis K."/>
            <person name="Brettin T.S."/>
            <person name="Bentley S.D."/>
            <person name="Hothersall J."/>
            <person name="Stephens E."/>
            <person name="Thomas C.M."/>
            <person name="Parkhill J."/>
            <person name="Levy S.B."/>
            <person name="Rainey P.B."/>
            <person name="Thomson N.R."/>
        </authorList>
    </citation>
    <scope>NUCLEOTIDE SEQUENCE [LARGE SCALE GENOMIC DNA]</scope>
    <source>
        <strain>Pf0-1</strain>
    </source>
</reference>
<comment type="function">
    <text evidence="1">Binds to DNA and alters its conformation. May be involved in regulation of gene expression, nucleoid organization and DNA protection.</text>
</comment>
<comment type="subunit">
    <text evidence="1">Homodimer.</text>
</comment>
<comment type="subcellular location">
    <subcellularLocation>
        <location evidence="1">Cytoplasm</location>
        <location evidence="1">Nucleoid</location>
    </subcellularLocation>
</comment>
<comment type="similarity">
    <text evidence="1">Belongs to the YbaB/EbfC family.</text>
</comment>
<name>Y1806_PSEPF</name>